<protein>
    <recommendedName>
        <fullName>Salicylate carboxymethyltransferase</fullName>
        <ecNumber evidence="4">2.1.1.274</ecNumber>
    </recommendedName>
    <alternativeName>
        <fullName>S-adenosyl-L-methionine:salicylate acid carboxylmethyltransferase</fullName>
        <shortName>CbSAMT</shortName>
    </alternativeName>
    <alternativeName>
        <fullName>Salicylate O-methyltransferase</fullName>
    </alternativeName>
</protein>
<sequence length="359" mass="40289">MDVRQVLHMKGGAGENSYAMNSFIQRQVISITKPITEAAITALYSGDTVTTRLAIADLGCSSGPNALFAVTELIKTVEELRKKMGRENSPEYQIFLNDLPGNDFNAIFRSLPIENDVDGVCFINGVPGSFYGRLFPRNTLHFIHSSYSLMWLSQVPIGIESNKGNIYMANTCPQSVLNAYYKQFQEDHALFLRCRAQEVVPGGRMVLTILGRRSEDRASTECCLIWQLLAMALNQMVSEGLIEEEKMDKFNIPQYTPSPTEVEAEILKEGSFLIDHIEASEIYWSSCTKDGDGGGSVEEEGYNVARCMRAVAEPLLLDHFGEAIIEDVFHRYKLLIIERMSKEKTKFINVIVSLIRKSD</sequence>
<comment type="function">
    <text evidence="4">Catalyzes the methylation of the free carboxyl end of the plant hormone salicylic acid (SA). Converts SA to SA methyl ester (MSA). The volatile compound MSA is hypothesized to act as an airborne signal that triggers defense responses in uninfected plants. MSA is an important chemoattractant for moth pollinated flowering plants.</text>
</comment>
<comment type="catalytic activity">
    <reaction evidence="4">
        <text>salicylate + S-adenosyl-L-methionine = methyl salicylate + S-adenosyl-L-homocysteine</text>
        <dbReference type="Rhea" id="RHEA:36095"/>
        <dbReference type="ChEBI" id="CHEBI:30762"/>
        <dbReference type="ChEBI" id="CHEBI:31832"/>
        <dbReference type="ChEBI" id="CHEBI:57856"/>
        <dbReference type="ChEBI" id="CHEBI:59789"/>
        <dbReference type="EC" id="2.1.1.274"/>
    </reaction>
</comment>
<comment type="biophysicochemical properties">
    <kinetics>
        <KM evidence="4">23 uM for salicylate</KM>
    </kinetics>
</comment>
<comment type="similarity">
    <text evidence="5">Belongs to the methyltransferase superfamily. SABATH family.</text>
</comment>
<evidence type="ECO:0000250" key="1">
    <source>
        <dbReference type="UniProtKB" id="A4GE69"/>
    </source>
</evidence>
<evidence type="ECO:0000250" key="2">
    <source>
        <dbReference type="UniProtKB" id="A4GE70"/>
    </source>
</evidence>
<evidence type="ECO:0000250" key="3">
    <source>
        <dbReference type="UniProtKB" id="Q9FLN8"/>
    </source>
</evidence>
<evidence type="ECO:0000269" key="4">
    <source>
    </source>
</evidence>
<evidence type="ECO:0000305" key="5"/>
<evidence type="ECO:0007744" key="6">
    <source>
        <dbReference type="PDB" id="1M6E"/>
    </source>
</evidence>
<evidence type="ECO:0007829" key="7">
    <source>
        <dbReference type="PDB" id="1M6E"/>
    </source>
</evidence>
<gene>
    <name type="primary">SAMT</name>
</gene>
<name>SAMT_CLABR</name>
<feature type="chain" id="PRO_0000406604" description="Salicylate carboxymethyltransferase">
    <location>
        <begin position="1"/>
        <end position="359"/>
    </location>
</feature>
<feature type="binding site" evidence="4 6">
    <location>
        <position position="18"/>
    </location>
    <ligand>
        <name>S-adenosyl-L-methionine</name>
        <dbReference type="ChEBI" id="CHEBI:59789"/>
    </ligand>
</feature>
<feature type="binding site" evidence="2">
    <location>
        <position position="18"/>
    </location>
    <ligand>
        <name>substrate</name>
    </ligand>
</feature>
<feature type="binding site" evidence="1">
    <location>
        <begin position="21"/>
        <end position="25"/>
    </location>
    <ligand>
        <name>substrate</name>
    </ligand>
</feature>
<feature type="binding site" evidence="4 6">
    <location>
        <position position="25"/>
    </location>
    <ligand>
        <name>substrate</name>
    </ligand>
</feature>
<feature type="binding site" evidence="4 6">
    <location>
        <begin position="59"/>
        <end position="61"/>
    </location>
    <ligand>
        <name>S-adenosyl-L-methionine</name>
        <dbReference type="ChEBI" id="CHEBI:59789"/>
    </ligand>
</feature>
<feature type="binding site" evidence="3">
    <location>
        <begin position="59"/>
        <end position="60"/>
    </location>
    <ligand>
        <name>S-adenosyl-L-methionine</name>
        <dbReference type="ChEBI" id="CHEBI:59789"/>
    </ligand>
</feature>
<feature type="binding site" evidence="1">
    <location>
        <position position="59"/>
    </location>
    <ligand>
        <name>S-adenosyl-L-methionine</name>
        <dbReference type="ChEBI" id="CHEBI:59789"/>
    </ligand>
</feature>
<feature type="binding site" evidence="3">
    <location>
        <position position="65"/>
    </location>
    <ligand>
        <name>S-adenosyl-L-methionine</name>
        <dbReference type="ChEBI" id="CHEBI:59789"/>
    </ligand>
</feature>
<feature type="binding site" evidence="2">
    <location>
        <begin position="96"/>
        <end position="99"/>
    </location>
    <ligand>
        <name>S-adenosyl-L-methionine</name>
        <dbReference type="ChEBI" id="CHEBI:59789"/>
    </ligand>
</feature>
<feature type="binding site" evidence="4 6">
    <location>
        <position position="98"/>
    </location>
    <ligand>
        <name>S-adenosyl-L-methionine</name>
        <dbReference type="ChEBI" id="CHEBI:59789"/>
    </ligand>
</feature>
<feature type="binding site" evidence="4 6">
    <location>
        <begin position="129"/>
        <end position="131"/>
    </location>
    <ligand>
        <name>S-adenosyl-L-methionine</name>
        <dbReference type="ChEBI" id="CHEBI:59789"/>
    </ligand>
</feature>
<feature type="binding site" evidence="3">
    <location>
        <begin position="146"/>
        <end position="148"/>
    </location>
    <ligand>
        <name>S-adenosyl-L-methionine</name>
        <dbReference type="ChEBI" id="CHEBI:59789"/>
    </ligand>
</feature>
<feature type="binding site" evidence="2">
    <location>
        <begin position="147"/>
        <end position="151"/>
    </location>
    <ligand>
        <name>substrate</name>
    </ligand>
</feature>
<feature type="binding site" evidence="4 6">
    <location>
        <position position="151"/>
    </location>
    <ligand>
        <name>substrate</name>
    </ligand>
</feature>
<feature type="binding site" evidence="3">
    <location>
        <position position="162"/>
    </location>
    <ligand>
        <name>Mg(2+)</name>
        <dbReference type="ChEBI" id="CHEBI:18420"/>
    </ligand>
</feature>
<feature type="binding site" evidence="3">
    <location>
        <position position="248"/>
    </location>
    <ligand>
        <name>Mg(2+)</name>
        <dbReference type="ChEBI" id="CHEBI:18420"/>
    </ligand>
</feature>
<feature type="binding site" evidence="3">
    <location>
        <position position="250"/>
    </location>
    <ligand>
        <name>Mg(2+)</name>
        <dbReference type="ChEBI" id="CHEBI:18420"/>
    </ligand>
</feature>
<feature type="binding site" evidence="3">
    <location>
        <position position="251"/>
    </location>
    <ligand>
        <name>Mg(2+)</name>
        <dbReference type="ChEBI" id="CHEBI:18420"/>
    </ligand>
</feature>
<feature type="binding site" evidence="4 6">
    <location>
        <position position="255"/>
    </location>
    <ligand>
        <name>substrate</name>
    </ligand>
</feature>
<feature type="mutagenesis site" description="Decreases activity 2-fold and switch in specificity for jasmonic acid as substrate; when associated with H-150; Q-225 and Y-347." evidence="4">
    <original>Y</original>
    <variation>S</variation>
    <location>
        <position position="147"/>
    </location>
</feature>
<feature type="mutagenesis site" description="Decreases activity 2-fold and switch in specificity for jasmonic acid as substrate; when associated with S-147; Q-225 and Y-347." evidence="4">
    <original>M</original>
    <variation>H</variation>
    <location>
        <position position="150"/>
    </location>
</feature>
<feature type="mutagenesis site" description="Decreases activity 2-fold and switch in specificity for jasmonic acid as substrate; when associated with S-147; H-150 and Y-347." evidence="4">
    <original>I</original>
    <variation>Q</variation>
    <location>
        <position position="225"/>
    </location>
</feature>
<feature type="mutagenesis site" description="Decreases activity 2-fold and switch in specificity for jasmonic acid as substrate; when associated with S-147; H-150 and Q-225." evidence="4">
    <original>F</original>
    <variation>Y</variation>
    <location>
        <position position="347"/>
    </location>
</feature>
<feature type="helix" evidence="7">
    <location>
        <begin position="4"/>
        <end position="7"/>
    </location>
</feature>
<feature type="turn" evidence="7">
    <location>
        <begin position="16"/>
        <end position="19"/>
    </location>
</feature>
<feature type="helix" evidence="7">
    <location>
        <begin position="23"/>
        <end position="31"/>
    </location>
</feature>
<feature type="helix" evidence="7">
    <location>
        <begin position="33"/>
        <end position="44"/>
    </location>
</feature>
<feature type="strand" evidence="7">
    <location>
        <begin position="45"/>
        <end position="53"/>
    </location>
</feature>
<feature type="strand" evidence="7">
    <location>
        <begin position="56"/>
        <end position="59"/>
    </location>
</feature>
<feature type="turn" evidence="7">
    <location>
        <begin position="64"/>
        <end position="68"/>
    </location>
</feature>
<feature type="helix" evidence="7">
    <location>
        <begin position="69"/>
        <end position="71"/>
    </location>
</feature>
<feature type="helix" evidence="7">
    <location>
        <begin position="74"/>
        <end position="82"/>
    </location>
</feature>
<feature type="strand" evidence="7">
    <location>
        <begin position="83"/>
        <end position="85"/>
    </location>
</feature>
<feature type="strand" evidence="7">
    <location>
        <begin position="91"/>
        <end position="98"/>
    </location>
</feature>
<feature type="helix" evidence="7">
    <location>
        <begin position="104"/>
        <end position="108"/>
    </location>
</feature>
<feature type="turn" evidence="7">
    <location>
        <begin position="109"/>
        <end position="113"/>
    </location>
</feature>
<feature type="strand" evidence="7">
    <location>
        <begin position="121"/>
        <end position="128"/>
    </location>
</feature>
<feature type="strand" evidence="7">
    <location>
        <begin position="130"/>
        <end position="132"/>
    </location>
</feature>
<feature type="strand" evidence="7">
    <location>
        <begin position="143"/>
        <end position="147"/>
    </location>
</feature>
<feature type="turn" evidence="7">
    <location>
        <begin position="163"/>
        <end position="166"/>
    </location>
</feature>
<feature type="strand" evidence="7">
    <location>
        <begin position="170"/>
        <end position="172"/>
    </location>
</feature>
<feature type="helix" evidence="7">
    <location>
        <begin position="181"/>
        <end position="198"/>
    </location>
</feature>
<feature type="strand" evidence="7">
    <location>
        <begin position="204"/>
        <end position="211"/>
    </location>
</feature>
<feature type="strand" evidence="7">
    <location>
        <begin position="213"/>
        <end position="219"/>
    </location>
</feature>
<feature type="turn" evidence="7">
    <location>
        <begin position="220"/>
        <end position="222"/>
    </location>
</feature>
<feature type="turn" evidence="7">
    <location>
        <begin position="224"/>
        <end position="226"/>
    </location>
</feature>
<feature type="helix" evidence="7">
    <location>
        <begin position="227"/>
        <end position="238"/>
    </location>
</feature>
<feature type="helix" evidence="7">
    <location>
        <begin position="248"/>
        <end position="250"/>
    </location>
</feature>
<feature type="helix" evidence="7">
    <location>
        <begin position="260"/>
        <end position="268"/>
    </location>
</feature>
<feature type="turn" evidence="7">
    <location>
        <begin position="269"/>
        <end position="271"/>
    </location>
</feature>
<feature type="strand" evidence="7">
    <location>
        <begin position="275"/>
        <end position="283"/>
    </location>
</feature>
<feature type="turn" evidence="7">
    <location>
        <begin position="297"/>
        <end position="302"/>
    </location>
</feature>
<feature type="helix" evidence="7">
    <location>
        <begin position="303"/>
        <end position="320"/>
    </location>
</feature>
<feature type="helix" evidence="7">
    <location>
        <begin position="322"/>
        <end position="341"/>
    </location>
</feature>
<feature type="strand" evidence="7">
    <location>
        <begin position="346"/>
        <end position="356"/>
    </location>
</feature>
<organism>
    <name type="scientific">Clarkia breweri</name>
    <name type="common">Fairy fans</name>
    <name type="synonym">Eucharidium breweri</name>
    <dbReference type="NCBI Taxonomy" id="36903"/>
    <lineage>
        <taxon>Eukaryota</taxon>
        <taxon>Viridiplantae</taxon>
        <taxon>Streptophyta</taxon>
        <taxon>Embryophyta</taxon>
        <taxon>Tracheophyta</taxon>
        <taxon>Spermatophyta</taxon>
        <taxon>Magnoliopsida</taxon>
        <taxon>eudicotyledons</taxon>
        <taxon>Gunneridae</taxon>
        <taxon>Pentapetalae</taxon>
        <taxon>rosids</taxon>
        <taxon>malvids</taxon>
        <taxon>Myrtales</taxon>
        <taxon>Onagraceae</taxon>
        <taxon>Onagroideae</taxon>
        <taxon>Onagreae</taxon>
        <taxon>Clarkia</taxon>
    </lineage>
</organism>
<keyword id="KW-0002">3D-structure</keyword>
<keyword id="KW-0460">Magnesium</keyword>
<keyword id="KW-0479">Metal-binding</keyword>
<keyword id="KW-0489">Methyltransferase</keyword>
<keyword id="KW-0949">S-adenosyl-L-methionine</keyword>
<keyword id="KW-0808">Transferase</keyword>
<dbReference type="EC" id="2.1.1.274" evidence="4"/>
<dbReference type="EMBL" id="AF133053">
    <property type="protein sequence ID" value="AAF00108.1"/>
    <property type="molecule type" value="mRNA"/>
</dbReference>
<dbReference type="PDB" id="1M6E">
    <property type="method" value="X-ray"/>
    <property type="resolution" value="3.00 A"/>
    <property type="chains" value="X=1-359"/>
</dbReference>
<dbReference type="PDBsum" id="1M6E"/>
<dbReference type="SMR" id="Q9SPV4"/>
<dbReference type="KEGG" id="ag:AAF00108"/>
<dbReference type="BRENDA" id="2.1.1.273">
    <property type="organism ID" value="1437"/>
</dbReference>
<dbReference type="BRENDA" id="2.1.1.274">
    <property type="organism ID" value="1437"/>
</dbReference>
<dbReference type="SABIO-RK" id="Q9SPV4"/>
<dbReference type="EvolutionaryTrace" id="Q9SPV4"/>
<dbReference type="GO" id="GO:0046872">
    <property type="term" value="F:metal ion binding"/>
    <property type="evidence" value="ECO:0007669"/>
    <property type="project" value="UniProtKB-KW"/>
</dbReference>
<dbReference type="GO" id="GO:0008168">
    <property type="term" value="F:methyltransferase activity"/>
    <property type="evidence" value="ECO:0007669"/>
    <property type="project" value="UniProtKB-KW"/>
</dbReference>
<dbReference type="GO" id="GO:0032259">
    <property type="term" value="P:methylation"/>
    <property type="evidence" value="ECO:0007669"/>
    <property type="project" value="UniProtKB-KW"/>
</dbReference>
<dbReference type="Gene3D" id="1.10.1200.270">
    <property type="entry name" value="Methyltransferase, alpha-helical capping domain"/>
    <property type="match status" value="1"/>
</dbReference>
<dbReference type="Gene3D" id="3.40.50.150">
    <property type="entry name" value="Vaccinia Virus protein VP39"/>
    <property type="match status" value="1"/>
</dbReference>
<dbReference type="InterPro" id="IPR005299">
    <property type="entry name" value="MeTrfase_7"/>
</dbReference>
<dbReference type="InterPro" id="IPR042086">
    <property type="entry name" value="MeTrfase_capping"/>
</dbReference>
<dbReference type="InterPro" id="IPR029063">
    <property type="entry name" value="SAM-dependent_MTases_sf"/>
</dbReference>
<dbReference type="PANTHER" id="PTHR31009">
    <property type="entry name" value="S-ADENOSYL-L-METHIONINE:CARBOXYL METHYLTRANSFERASE FAMILY PROTEIN"/>
    <property type="match status" value="1"/>
</dbReference>
<dbReference type="Pfam" id="PF03492">
    <property type="entry name" value="Methyltransf_7"/>
    <property type="match status" value="1"/>
</dbReference>
<dbReference type="SUPFAM" id="SSF53335">
    <property type="entry name" value="S-adenosyl-L-methionine-dependent methyltransferases"/>
    <property type="match status" value="1"/>
</dbReference>
<accession>Q9SPV4</accession>
<proteinExistence type="evidence at protein level"/>
<reference key="1">
    <citation type="journal article" date="1999" name="Arch. Biochem. Biophys.">
        <title>S-Adenosyl-L-methionine:salicylic acid carboxyl methyltransferase, an enzyme involved in floral scent production and plant defense, represents a new class of plant methyltransferases.</title>
        <authorList>
            <person name="Ross J.R."/>
            <person name="Nam K.H."/>
            <person name="D'Auria J.C."/>
            <person name="Pichersky E."/>
        </authorList>
    </citation>
    <scope>NUCLEOTIDE SEQUENCE [MRNA]</scope>
</reference>
<reference key="2">
    <citation type="journal article" date="2003" name="Plant Cell">
        <title>Structural basis for substrate recognition in the salicylic acid carboxyl methyltransferase family.</title>
        <authorList>
            <person name="Zubieta C."/>
            <person name="Ross J.R."/>
            <person name="Koscheski P."/>
            <person name="Yang Y."/>
            <person name="Pichersky E."/>
            <person name="Noel J.P."/>
        </authorList>
    </citation>
    <scope>X-RAY CRYSTALLOGRAPHY (3.00 ANGSTROMS) IN COMPLEX WITH S-ADENOSYL-L-HOMOCYSTEINE AND SALICYLIC ACID</scope>
    <scope>FUNCTION</scope>
    <scope>BIOPHYSICOCHEMICAL PROPERTIES</scope>
    <scope>CATALYTIC ACTIVITY</scope>
    <scope>MUTAGENESIS OF TYR-147; MET-150; ILE-225 AND PHE-347</scope>
</reference>